<accession>Q33BZ5</accession>
<gene>
    <name evidence="1" type="primary">rpl16</name>
</gene>
<dbReference type="EMBL" id="AB240139">
    <property type="protein sequence ID" value="BAE48040.1"/>
    <property type="molecule type" value="Genomic_DNA"/>
</dbReference>
<dbReference type="RefSeq" id="YP_398901.1">
    <property type="nucleotide sequence ID" value="NC_007602.1"/>
</dbReference>
<dbReference type="SMR" id="Q33BZ5"/>
<dbReference type="GeneID" id="3776290"/>
<dbReference type="KEGG" id="nto:3776290"/>
<dbReference type="OrthoDB" id="1850746at2759"/>
<dbReference type="GO" id="GO:0009507">
    <property type="term" value="C:chloroplast"/>
    <property type="evidence" value="ECO:0007669"/>
    <property type="project" value="UniProtKB-SubCell"/>
</dbReference>
<dbReference type="GO" id="GO:0005762">
    <property type="term" value="C:mitochondrial large ribosomal subunit"/>
    <property type="evidence" value="ECO:0007669"/>
    <property type="project" value="TreeGrafter"/>
</dbReference>
<dbReference type="GO" id="GO:0019843">
    <property type="term" value="F:rRNA binding"/>
    <property type="evidence" value="ECO:0007669"/>
    <property type="project" value="InterPro"/>
</dbReference>
<dbReference type="GO" id="GO:0003735">
    <property type="term" value="F:structural constituent of ribosome"/>
    <property type="evidence" value="ECO:0007669"/>
    <property type="project" value="InterPro"/>
</dbReference>
<dbReference type="GO" id="GO:0032543">
    <property type="term" value="P:mitochondrial translation"/>
    <property type="evidence" value="ECO:0007669"/>
    <property type="project" value="TreeGrafter"/>
</dbReference>
<dbReference type="CDD" id="cd01433">
    <property type="entry name" value="Ribosomal_L16_L10e"/>
    <property type="match status" value="1"/>
</dbReference>
<dbReference type="FunFam" id="3.90.1170.10:FF:000001">
    <property type="entry name" value="50S ribosomal protein L16"/>
    <property type="match status" value="1"/>
</dbReference>
<dbReference type="Gene3D" id="3.90.1170.10">
    <property type="entry name" value="Ribosomal protein L10e/L16"/>
    <property type="match status" value="1"/>
</dbReference>
<dbReference type="HAMAP" id="MF_01342">
    <property type="entry name" value="Ribosomal_uL16"/>
    <property type="match status" value="1"/>
</dbReference>
<dbReference type="InterPro" id="IPR047873">
    <property type="entry name" value="Ribosomal_uL16"/>
</dbReference>
<dbReference type="InterPro" id="IPR000114">
    <property type="entry name" value="Ribosomal_uL16_bact-type"/>
</dbReference>
<dbReference type="InterPro" id="IPR020798">
    <property type="entry name" value="Ribosomal_uL16_CS"/>
</dbReference>
<dbReference type="InterPro" id="IPR016180">
    <property type="entry name" value="Ribosomal_uL16_dom"/>
</dbReference>
<dbReference type="InterPro" id="IPR036920">
    <property type="entry name" value="Ribosomal_uL16_sf"/>
</dbReference>
<dbReference type="NCBIfam" id="TIGR01164">
    <property type="entry name" value="rplP_bact"/>
    <property type="match status" value="1"/>
</dbReference>
<dbReference type="PANTHER" id="PTHR12220">
    <property type="entry name" value="50S/60S RIBOSOMAL PROTEIN L16"/>
    <property type="match status" value="1"/>
</dbReference>
<dbReference type="PANTHER" id="PTHR12220:SF13">
    <property type="entry name" value="LARGE RIBOSOMAL SUBUNIT PROTEIN UL16M"/>
    <property type="match status" value="1"/>
</dbReference>
<dbReference type="Pfam" id="PF00252">
    <property type="entry name" value="Ribosomal_L16"/>
    <property type="match status" value="1"/>
</dbReference>
<dbReference type="PRINTS" id="PR00060">
    <property type="entry name" value="RIBOSOMALL16"/>
</dbReference>
<dbReference type="SUPFAM" id="SSF54686">
    <property type="entry name" value="Ribosomal protein L16p/L10e"/>
    <property type="match status" value="1"/>
</dbReference>
<dbReference type="PROSITE" id="PS00586">
    <property type="entry name" value="RIBOSOMAL_L16_1"/>
    <property type="match status" value="1"/>
</dbReference>
<dbReference type="PROSITE" id="PS00701">
    <property type="entry name" value="RIBOSOMAL_L16_2"/>
    <property type="match status" value="1"/>
</dbReference>
<evidence type="ECO:0000255" key="1">
    <source>
        <dbReference type="HAMAP-Rule" id="MF_01342"/>
    </source>
</evidence>
<evidence type="ECO:0000256" key="2">
    <source>
        <dbReference type="SAM" id="MobiDB-lite"/>
    </source>
</evidence>
<evidence type="ECO:0000305" key="3"/>
<geneLocation type="chloroplast"/>
<keyword id="KW-0150">Chloroplast</keyword>
<keyword id="KW-0934">Plastid</keyword>
<keyword id="KW-0687">Ribonucleoprotein</keyword>
<keyword id="KW-0689">Ribosomal protein</keyword>
<reference key="1">
    <citation type="journal article" date="2006" name="Mol. Genet. Genomics">
        <title>The chloroplast genome of Nicotiana sylvestris and Nicotiana tomentosiformis: complete sequencing confirms that the Nicotiana sylvestris progenitor is the maternal genome donor of Nicotiana tabacum.</title>
        <authorList>
            <person name="Yukawa M."/>
            <person name="Tsudzuki T."/>
            <person name="Sugiura M."/>
        </authorList>
    </citation>
    <scope>NUCLEOTIDE SEQUENCE [LARGE SCALE GENOMIC DNA]</scope>
</reference>
<protein>
    <recommendedName>
        <fullName evidence="1">Large ribosomal subunit protein uL16c</fullName>
    </recommendedName>
    <alternativeName>
        <fullName evidence="3">50S ribosomal protein L16, chloroplastic</fullName>
    </alternativeName>
</protein>
<comment type="subunit">
    <text evidence="1">Part of the 50S ribosomal subunit.</text>
</comment>
<comment type="subcellular location">
    <subcellularLocation>
        <location>Plastid</location>
        <location>Chloroplast</location>
    </subcellularLocation>
</comment>
<comment type="similarity">
    <text evidence="1">Belongs to the universal ribosomal protein uL16 family.</text>
</comment>
<sequence length="134" mass="15186">MLSPKRTRFRKQHRGRMKGISHRGNHISFGKYALQALEPAWITSRQIEAGRRAMTRNARRGGKIWVRIFPDKPVTLRPAETRMGSGKGSPEYWVAVVKPGRILYEMGGVTENIARRAISLAASKMPIQTQFIIS</sequence>
<feature type="chain" id="PRO_0000062294" description="Large ribosomal subunit protein uL16c">
    <location>
        <begin position="1"/>
        <end position="134"/>
    </location>
</feature>
<feature type="region of interest" description="Disordered" evidence="2">
    <location>
        <begin position="1"/>
        <end position="22"/>
    </location>
</feature>
<organism>
    <name type="scientific">Nicotiana tomentosiformis</name>
    <name type="common">Tobacco</name>
    <dbReference type="NCBI Taxonomy" id="4098"/>
    <lineage>
        <taxon>Eukaryota</taxon>
        <taxon>Viridiplantae</taxon>
        <taxon>Streptophyta</taxon>
        <taxon>Embryophyta</taxon>
        <taxon>Tracheophyta</taxon>
        <taxon>Spermatophyta</taxon>
        <taxon>Magnoliopsida</taxon>
        <taxon>eudicotyledons</taxon>
        <taxon>Gunneridae</taxon>
        <taxon>Pentapetalae</taxon>
        <taxon>asterids</taxon>
        <taxon>lamiids</taxon>
        <taxon>Solanales</taxon>
        <taxon>Solanaceae</taxon>
        <taxon>Nicotianoideae</taxon>
        <taxon>Nicotianeae</taxon>
        <taxon>Nicotiana</taxon>
    </lineage>
</organism>
<proteinExistence type="inferred from homology"/>
<name>RK16_NICTO</name>